<feature type="chain" id="PRO_0000456969" description="Achaete-scute homolog 5">
    <location>
        <begin position="1"/>
        <end position="188"/>
    </location>
</feature>
<feature type="domain" description="bHLH" evidence="2">
    <location>
        <begin position="80"/>
        <end position="132"/>
    </location>
</feature>
<feature type="region of interest" description="Basic motif" evidence="2">
    <location>
        <begin position="80"/>
        <end position="93"/>
    </location>
</feature>
<feature type="region of interest" description="Helix-loop-helix motif" evidence="2">
    <location>
        <begin position="94"/>
        <end position="132"/>
    </location>
</feature>
<feature type="region of interest" description="Disordered" evidence="3">
    <location>
        <begin position="139"/>
        <end position="188"/>
    </location>
</feature>
<feature type="compositionally biased region" description="Pro residues" evidence="3">
    <location>
        <begin position="142"/>
        <end position="153"/>
    </location>
</feature>
<feature type="compositionally biased region" description="Polar residues" evidence="3">
    <location>
        <begin position="158"/>
        <end position="168"/>
    </location>
</feature>
<feature type="compositionally biased region" description="Low complexity" evidence="3">
    <location>
        <begin position="169"/>
        <end position="181"/>
    </location>
</feature>
<comment type="function">
    <text evidence="4 5 6">Transcription factor (PubMed:30426815). Probably binds E-box motifs 5'-CANNTG-3' in complex with transcription factor TCF3/E12 (PubMed:30426815). Negatively modulates transcription of target genes such as CDH1/E-cadherin, perhaps by recruiting the PRC2 repressive complex to regulatory elements (PubMed:30426815, PubMed:30504223). Regulates ameloblast development and tooth germ growth, perhaps acting by positively modulating migration of inner enamel epithelium (IEE) cells (PubMed:30426815, PubMed:30504223, PubMed:34812512). Plays a role in enamel formation (PubMed:34812512).</text>
</comment>
<comment type="subunit">
    <text evidence="4">Interacts with transcription factor TCF3/E12.</text>
</comment>
<comment type="subcellular location">
    <subcellularLocation>
        <location evidence="2">Nucleus</location>
    </subcellularLocation>
</comment>
<comment type="tissue specificity">
    <text evidence="4">Expressed in teeth (at protein level).</text>
</comment>
<comment type="developmental stage">
    <text evidence="4 6">Expressed in inner enamel epithelium (IEE) cells of molars at 14 dpc and 17 dpc, during ameloblast development (at protein level) (PubMed:30426815, PubMed:34812512). Expressed in molars and incisors at postnatal day 1 (P1) (at protein level) (PubMed:30426815). Expressed in Hertwig epithelial root sheath (HERS) cells during molar development (at protein level) (PubMed:30426815). Earliest expression in the incisor region at 11 dpc (PubMed:30426815).</text>
</comment>
<comment type="disruption phenotype">
    <text evidence="5 6">Knockout mice are fertile, but have enamel hypoplasia and small teeth (PubMed:30504223, PubMed:34812512). Abnormal ectopic expression of CDH1/E-cadherin in inner enamel epithelium (IEE) cells, but not in cells of the stratum intermedium (SI) at postnatal day 1 (P1) (PubMed:30504223). Inhibits the growth of clipped incisors (PubMed:30504223). Significantly reduces mRNA levels of SOX21, AMBN, ENAM, and AMELX in molars at P1 (PubMed:34812512). Develops fewer, smaller, incisors at 3 months of age in a transcription factor SP6/Epfn knockout background (PubMed:30504223). Epithelial cell invasion is inhibited and CDH1 ectopically expressed in dental epithelial cells at 3 months of age, in an SP6 knockout background (PubMed:30504223).</text>
</comment>
<evidence type="ECO:0000250" key="1">
    <source>
        <dbReference type="UniProtKB" id="Q7RTU5"/>
    </source>
</evidence>
<evidence type="ECO:0000255" key="2">
    <source>
        <dbReference type="PROSITE-ProRule" id="PRU00981"/>
    </source>
</evidence>
<evidence type="ECO:0000256" key="3">
    <source>
        <dbReference type="SAM" id="MobiDB-lite"/>
    </source>
</evidence>
<evidence type="ECO:0000269" key="4">
    <source>
    </source>
</evidence>
<evidence type="ECO:0000269" key="5">
    <source>
    </source>
</evidence>
<evidence type="ECO:0000269" key="6">
    <source>
    </source>
</evidence>
<evidence type="ECO:0000303" key="7">
    <source>
    </source>
</evidence>
<evidence type="ECO:0000305" key="8"/>
<evidence type="ECO:0000312" key="9">
    <source>
        <dbReference type="EMBL" id="AXG50147.1"/>
    </source>
</evidence>
<evidence type="ECO:0000312" key="10">
    <source>
        <dbReference type="MGI" id="MGI:2685043"/>
    </source>
</evidence>
<evidence type="ECO:0000312" key="11">
    <source>
        <dbReference type="Proteomes" id="UP000000589"/>
    </source>
</evidence>
<accession>M0QWB7</accession>
<dbReference type="EMBL" id="MG575629">
    <property type="protein sequence ID" value="AXG50147.1"/>
    <property type="molecule type" value="mRNA"/>
</dbReference>
<dbReference type="CCDS" id="CCDS59541.1"/>
<dbReference type="RefSeq" id="NP_001257538.1">
    <property type="nucleotide sequence ID" value="NM_001270609.2"/>
</dbReference>
<dbReference type="SMR" id="M0QWB7"/>
<dbReference type="FunCoup" id="M0QWB7">
    <property type="interactions" value="171"/>
</dbReference>
<dbReference type="STRING" id="10090.ENSMUSP00000137746"/>
<dbReference type="iPTMnet" id="M0QWB7"/>
<dbReference type="PhosphoSitePlus" id="M0QWB7"/>
<dbReference type="PaxDb" id="10090-ENSMUSP00000137746"/>
<dbReference type="Ensembl" id="ENSMUST00000180436.2">
    <property type="protein sequence ID" value="ENSMUSP00000137746.2"/>
    <property type="gene ID" value="ENSMUSG00000097918.2"/>
</dbReference>
<dbReference type="GeneID" id="226439"/>
<dbReference type="KEGG" id="mmu:226439"/>
<dbReference type="UCSC" id="uc033fly.1">
    <property type="organism name" value="mouse"/>
</dbReference>
<dbReference type="AGR" id="MGI:2685043"/>
<dbReference type="CTD" id="647219"/>
<dbReference type="MGI" id="MGI:2685043">
    <property type="gene designation" value="Ascl5"/>
</dbReference>
<dbReference type="VEuPathDB" id="HostDB:ENSMUSG00000097918"/>
<dbReference type="eggNOG" id="KOG4029">
    <property type="taxonomic scope" value="Eukaryota"/>
</dbReference>
<dbReference type="GeneTree" id="ENSGT00940000163864"/>
<dbReference type="HOGENOM" id="CLU_095919_0_0_1"/>
<dbReference type="InParanoid" id="M0QWB7"/>
<dbReference type="OMA" id="GVYDCPF"/>
<dbReference type="OrthoDB" id="5976910at2759"/>
<dbReference type="BioGRID-ORCS" id="226439">
    <property type="hits" value="2 hits in 73 CRISPR screens"/>
</dbReference>
<dbReference type="PRO" id="PR:M0QWB7"/>
<dbReference type="Proteomes" id="UP000000589">
    <property type="component" value="Chromosome 1"/>
</dbReference>
<dbReference type="RNAct" id="M0QWB7">
    <property type="molecule type" value="protein"/>
</dbReference>
<dbReference type="Bgee" id="ENSMUSG00000097918">
    <property type="expression patterns" value="Expressed in ureter and 13 other cell types or tissues"/>
</dbReference>
<dbReference type="GO" id="GO:0000785">
    <property type="term" value="C:chromatin"/>
    <property type="evidence" value="ECO:0000314"/>
    <property type="project" value="UniProtKB"/>
</dbReference>
<dbReference type="GO" id="GO:0090575">
    <property type="term" value="C:RNA polymerase II transcription regulator complex"/>
    <property type="evidence" value="ECO:0000315"/>
    <property type="project" value="UniProtKB"/>
</dbReference>
<dbReference type="GO" id="GO:0001228">
    <property type="term" value="F:DNA-binding transcription activator activity, RNA polymerase II-specific"/>
    <property type="evidence" value="ECO:0000315"/>
    <property type="project" value="UniProtKB"/>
</dbReference>
<dbReference type="GO" id="GO:0140297">
    <property type="term" value="F:DNA-binding transcription factor binding"/>
    <property type="evidence" value="ECO:0000353"/>
    <property type="project" value="UniProtKB"/>
</dbReference>
<dbReference type="GO" id="GO:0001227">
    <property type="term" value="F:DNA-binding transcription repressor activity, RNA polymerase II-specific"/>
    <property type="evidence" value="ECO:0000315"/>
    <property type="project" value="UniProtKB"/>
</dbReference>
<dbReference type="GO" id="GO:0046983">
    <property type="term" value="F:protein dimerization activity"/>
    <property type="evidence" value="ECO:0007669"/>
    <property type="project" value="InterPro"/>
</dbReference>
<dbReference type="GO" id="GO:0000978">
    <property type="term" value="F:RNA polymerase II cis-regulatory region sequence-specific DNA binding"/>
    <property type="evidence" value="ECO:0000315"/>
    <property type="project" value="UniProtKB"/>
</dbReference>
<dbReference type="GO" id="GO:0036305">
    <property type="term" value="P:ameloblast differentiation"/>
    <property type="evidence" value="ECO:0000315"/>
    <property type="project" value="UniProtKB"/>
</dbReference>
<dbReference type="GO" id="GO:0097186">
    <property type="term" value="P:amelogenesis"/>
    <property type="evidence" value="ECO:0000315"/>
    <property type="project" value="UniProtKB"/>
</dbReference>
<dbReference type="GO" id="GO:0000122">
    <property type="term" value="P:negative regulation of transcription by RNA polymerase II"/>
    <property type="evidence" value="ECO:0000315"/>
    <property type="project" value="UniProtKB"/>
</dbReference>
<dbReference type="GO" id="GO:0045944">
    <property type="term" value="P:positive regulation of transcription by RNA polymerase II"/>
    <property type="evidence" value="ECO:0000315"/>
    <property type="project" value="UniProtKB"/>
</dbReference>
<dbReference type="CDD" id="cd19747">
    <property type="entry name" value="bHLH_TS_ASCL5"/>
    <property type="match status" value="1"/>
</dbReference>
<dbReference type="FunFam" id="4.10.280.10:FF:000038">
    <property type="entry name" value="achaete-scute homolog 3"/>
    <property type="match status" value="1"/>
</dbReference>
<dbReference type="Gene3D" id="4.10.280.10">
    <property type="entry name" value="Helix-loop-helix DNA-binding domain"/>
    <property type="match status" value="1"/>
</dbReference>
<dbReference type="InterPro" id="IPR011598">
    <property type="entry name" value="bHLH_dom"/>
</dbReference>
<dbReference type="InterPro" id="IPR050283">
    <property type="entry name" value="E-box_TF_Regulators"/>
</dbReference>
<dbReference type="InterPro" id="IPR036638">
    <property type="entry name" value="HLH_DNA-bd_sf"/>
</dbReference>
<dbReference type="PANTHER" id="PTHR23349">
    <property type="entry name" value="BASIC HELIX-LOOP-HELIX TRANSCRIPTION FACTOR, TWIST"/>
    <property type="match status" value="1"/>
</dbReference>
<dbReference type="PANTHER" id="PTHR23349:SF108">
    <property type="entry name" value="BHLH DOMAIN-CONTAINING PROTEIN"/>
    <property type="match status" value="1"/>
</dbReference>
<dbReference type="Pfam" id="PF00010">
    <property type="entry name" value="HLH"/>
    <property type="match status" value="1"/>
</dbReference>
<dbReference type="SMART" id="SM00353">
    <property type="entry name" value="HLH"/>
    <property type="match status" value="1"/>
</dbReference>
<dbReference type="SUPFAM" id="SSF47459">
    <property type="entry name" value="HLH, helix-loop-helix DNA-binding domain"/>
    <property type="match status" value="1"/>
</dbReference>
<dbReference type="PROSITE" id="PS50888">
    <property type="entry name" value="BHLH"/>
    <property type="match status" value="1"/>
</dbReference>
<name>ASCL5_MOUSE</name>
<keyword id="KW-0238">DNA-binding</keyword>
<keyword id="KW-0539">Nucleus</keyword>
<keyword id="KW-1185">Reference proteome</keyword>
<keyword id="KW-0804">Transcription</keyword>
<keyword id="KW-0805">Transcription regulation</keyword>
<organism evidence="11">
    <name type="scientific">Mus musculus</name>
    <name type="common">Mouse</name>
    <dbReference type="NCBI Taxonomy" id="10090"/>
    <lineage>
        <taxon>Eukaryota</taxon>
        <taxon>Metazoa</taxon>
        <taxon>Chordata</taxon>
        <taxon>Craniata</taxon>
        <taxon>Vertebrata</taxon>
        <taxon>Euteleostomi</taxon>
        <taxon>Mammalia</taxon>
        <taxon>Eutheria</taxon>
        <taxon>Euarchontoglires</taxon>
        <taxon>Glires</taxon>
        <taxon>Rodentia</taxon>
        <taxon>Myomorpha</taxon>
        <taxon>Muroidea</taxon>
        <taxon>Muridae</taxon>
        <taxon>Murinae</taxon>
        <taxon>Mus</taxon>
        <taxon>Mus</taxon>
    </lineage>
</organism>
<reference evidence="9" key="1">
    <citation type="submission" date="2018-08" db="EMBL/GenBank/DDBJ databases">
        <title>Mouse AmeloD cDNA.</title>
        <authorList>
            <person name="He B."/>
            <person name="Ishijima M."/>
            <person name="Chiba Y."/>
        </authorList>
    </citation>
    <scope>NUCLEOTIDE SEQUENCE [MRNA]</scope>
</reference>
<reference evidence="11" key="2">
    <citation type="journal article" date="2009" name="PLoS Biol.">
        <title>Lineage-specific biology revealed by a finished genome assembly of the mouse.</title>
        <authorList>
            <person name="Church D.M."/>
            <person name="Goodstadt L."/>
            <person name="Hillier L.W."/>
            <person name="Zody M.C."/>
            <person name="Goldstein S."/>
            <person name="She X."/>
            <person name="Bult C.J."/>
            <person name="Agarwala R."/>
            <person name="Cherry J.L."/>
            <person name="DiCuccio M."/>
            <person name="Hlavina W."/>
            <person name="Kapustin Y."/>
            <person name="Meric P."/>
            <person name="Maglott D."/>
            <person name="Birtle Z."/>
            <person name="Marques A.C."/>
            <person name="Graves T."/>
            <person name="Zhou S."/>
            <person name="Teague B."/>
            <person name="Potamousis K."/>
            <person name="Churas C."/>
            <person name="Place M."/>
            <person name="Herschleb J."/>
            <person name="Runnheim R."/>
            <person name="Forrest D."/>
            <person name="Amos-Landgraf J."/>
            <person name="Schwartz D.C."/>
            <person name="Cheng Z."/>
            <person name="Lindblad-Toh K."/>
            <person name="Eichler E.E."/>
            <person name="Ponting C.P."/>
        </authorList>
    </citation>
    <scope>NUCLEOTIDE SEQUENCE [LARGE SCALE GENOMIC DNA]</scope>
    <source>
        <strain evidence="11">C57BL/6J</strain>
    </source>
</reference>
<reference evidence="8" key="3">
    <citation type="journal article" date="2019" name="J. Biol. Chem.">
        <title>The transcription factor AmeloD stimulates epithelial cell motility essential for tooth morphology.</title>
        <authorList>
            <person name="Chiba Y."/>
            <person name="He B."/>
            <person name="Yoshizaki K."/>
            <person name="Rhodes C."/>
            <person name="Ishijima M."/>
            <person name="Bleck C.K.E."/>
            <person name="Stempinski E."/>
            <person name="Chu E.Y."/>
            <person name="Nakamura T."/>
            <person name="Iwamoto T."/>
            <person name="de Vega S."/>
            <person name="Saito K."/>
            <person name="Fukumoto S."/>
            <person name="Yamada Y."/>
        </authorList>
    </citation>
    <scope>FUNCTION</scope>
    <scope>DISRUPTION PHENOTYPE</scope>
</reference>
<reference evidence="8" key="4">
    <citation type="journal article" date="2019" name="J. Dent. Res.">
        <title>Identification of the Novel Tooth-Specific Transcription Factor AmeloD.</title>
        <authorList>
            <person name="He B."/>
            <person name="Chiba Y."/>
            <person name="Li H."/>
            <person name="de Vega S."/>
            <person name="Tanaka K."/>
            <person name="Yoshizaki K."/>
            <person name="Ishijima M."/>
            <person name="Yuasa K."/>
            <person name="Ishikawa M."/>
            <person name="Rhodes C."/>
            <person name="Sakai K."/>
            <person name="Zhang P."/>
            <person name="Fukumoto S."/>
            <person name="Zhou X."/>
            <person name="Yamada Y."/>
        </authorList>
    </citation>
    <scope>FUNCTION</scope>
    <scope>INTERACTION WITH TCF3</scope>
    <scope>TISSUE SPECIFICITY</scope>
    <scope>DEVELOPMENTAL STAGE</scope>
</reference>
<reference evidence="8" key="5">
    <citation type="journal article" date="2022" name="J. Cell. Physiol.">
        <title>The tooth-specific basic helix-loop-helix factor AmeloD promotes differentiation of ameloblasts.</title>
        <authorList>
            <person name="Jia L."/>
            <person name="Chiba Y."/>
            <person name="Saito K."/>
            <person name="Yoshizaki K."/>
            <person name="Tian T."/>
            <person name="Han X."/>
            <person name="Mizuta K."/>
            <person name="Chiba M."/>
            <person name="Wang X."/>
            <person name="Al Thamin S."/>
            <person name="Yamada A."/>
            <person name="Fukumoto S."/>
        </authorList>
    </citation>
    <scope>FUNCTION</scope>
    <scope>DEVELOPMENTAL STAGE</scope>
    <scope>DISRUPTION PHENOTYPE</scope>
</reference>
<sequence>MNSNFCRALVDRGPPGGMQLGVVAPAGQTPLAATEPLSNVPFLLYPGHSEPPYYDAYTGVFPYVPFPGAFGVYDYPFEPAFIQKRNERERQRVKCVNEGYARLRGHLPGALTEKRLSKVETLRAAIRYIKYLQELLSATPDGAPPPATSPPPAHTGHSNVPQPSSLVAESSGSPFSSSPFLESEEPSL</sequence>
<gene>
    <name evidence="10" type="primary">Ascl5</name>
    <name evidence="7" type="synonym">AmeloD</name>
    <name evidence="10" type="synonym">bHLHa47</name>
</gene>
<proteinExistence type="evidence at protein level"/>
<protein>
    <recommendedName>
        <fullName evidence="1">Achaete-scute homolog 5</fullName>
    </recommendedName>
    <alternativeName>
        <fullName evidence="10">Achaete-scute family bHLH transcription factor 5</fullName>
    </alternativeName>
</protein>